<gene>
    <name type="ORF">Tb927.5.1730</name>
</gene>
<name>ECOT4_TRYB2</name>
<dbReference type="EMBL" id="AC104617">
    <property type="protein sequence ID" value="AAX79124.1"/>
    <property type="molecule type" value="Genomic_DNA"/>
</dbReference>
<dbReference type="SMR" id="Q57ZP2"/>
<dbReference type="STRING" id="185431.Q57ZP2"/>
<dbReference type="PaxDb" id="5691-AAZ11288"/>
<dbReference type="GeneID" id="3657286"/>
<dbReference type="KEGG" id="tbr:Tb927.5.1730"/>
<dbReference type="VEuPathDB" id="TriTrypDB:Tb927.5.1730"/>
<dbReference type="InParanoid" id="Q57ZP2"/>
<dbReference type="OMA" id="NDAANHQ"/>
<dbReference type="OrthoDB" id="271632at2759"/>
<dbReference type="Proteomes" id="UP000008524">
    <property type="component" value="Chromosome 5"/>
</dbReference>
<dbReference type="GO" id="GO:0120119">
    <property type="term" value="C:flagellum attachment zone"/>
    <property type="evidence" value="ECO:0000314"/>
    <property type="project" value="GeneDB"/>
</dbReference>
<dbReference type="GO" id="GO:0097740">
    <property type="term" value="C:paraflagellar rod"/>
    <property type="evidence" value="ECO:0000314"/>
    <property type="project" value="GeneDB"/>
</dbReference>
<dbReference type="GO" id="GO:0004867">
    <property type="term" value="F:serine-type endopeptidase inhibitor activity"/>
    <property type="evidence" value="ECO:0007669"/>
    <property type="project" value="InterPro"/>
</dbReference>
<dbReference type="Gene3D" id="2.60.40.550">
    <property type="entry name" value="Ecotin"/>
    <property type="match status" value="1"/>
</dbReference>
<dbReference type="InterPro" id="IPR036198">
    <property type="entry name" value="Ecotin_sf"/>
</dbReference>
<dbReference type="InterPro" id="IPR005658">
    <property type="entry name" value="Prot_inh_ecotin"/>
</dbReference>
<dbReference type="PANTHER" id="PTHR35890">
    <property type="match status" value="1"/>
</dbReference>
<dbReference type="PANTHER" id="PTHR35890:SF3">
    <property type="entry name" value="ECOTIN"/>
    <property type="match status" value="1"/>
</dbReference>
<dbReference type="Pfam" id="PF03974">
    <property type="entry name" value="Ecotin"/>
    <property type="match status" value="1"/>
</dbReference>
<dbReference type="PIRSF" id="PIRSF006865">
    <property type="entry name" value="Prot_inh_ecotin"/>
    <property type="match status" value="1"/>
</dbReference>
<dbReference type="SUPFAM" id="SSF49772">
    <property type="entry name" value="Ecotin, trypsin inhibitor"/>
    <property type="match status" value="1"/>
</dbReference>
<comment type="similarity">
    <text evidence="1">Belongs to the protease inhibitor I11 (ecotin) family.</text>
</comment>
<accession>Q57ZP2</accession>
<protein>
    <recommendedName>
        <fullName>Ecotin-like protein 4</fullName>
    </recommendedName>
</protein>
<organism>
    <name type="scientific">Trypanosoma brucei brucei (strain 927/4 GUTat10.1)</name>
    <dbReference type="NCBI Taxonomy" id="185431"/>
    <lineage>
        <taxon>Eukaryota</taxon>
        <taxon>Discoba</taxon>
        <taxon>Euglenozoa</taxon>
        <taxon>Kinetoplastea</taxon>
        <taxon>Metakinetoplastina</taxon>
        <taxon>Trypanosomatida</taxon>
        <taxon>Trypanosomatidae</taxon>
        <taxon>Trypanosoma</taxon>
    </lineage>
</organism>
<evidence type="ECO:0000305" key="1"/>
<evidence type="ECO:0000312" key="2">
    <source>
        <dbReference type="Proteomes" id="UP000008524"/>
    </source>
</evidence>
<feature type="chain" id="PRO_0000291610" description="Ecotin-like protein 4">
    <location>
        <begin position="1"/>
        <end position="165"/>
    </location>
</feature>
<sequence length="165" mass="19342">MFGSRKASRRRSYRSRSTMGSRVDIDFCKFEEPPSPREGERRCLFVLDPLEHYVESKDRMVELLPGRVETVDGVNTYYINGCTTEEKFPGLDYTCYRVDLRDTYRSRCAVPPEATPEEKFISHRHRKLIPYNSRKPVVVYLPEDAQLHYRIWTGGQEVVAKKAEE</sequence>
<proteinExistence type="inferred from homology"/>
<keyword id="KW-1185">Reference proteome</keyword>
<reference key="1">
    <citation type="journal article" date="2005" name="Science">
        <title>The genome of the African trypanosome Trypanosoma brucei.</title>
        <authorList>
            <person name="Berriman M."/>
            <person name="Ghedin E."/>
            <person name="Hertz-Fowler C."/>
            <person name="Blandin G."/>
            <person name="Renauld H."/>
            <person name="Bartholomeu D.C."/>
            <person name="Lennard N.J."/>
            <person name="Caler E."/>
            <person name="Hamlin N.E."/>
            <person name="Haas B."/>
            <person name="Bohme U."/>
            <person name="Hannick L."/>
            <person name="Aslett M.A."/>
            <person name="Shallom J."/>
            <person name="Marcello L."/>
            <person name="Hou L."/>
            <person name="Wickstead B."/>
            <person name="Alsmark U.C.M."/>
            <person name="Arrowsmith C."/>
            <person name="Atkin R.J."/>
            <person name="Barron A.J."/>
            <person name="Bringaud F."/>
            <person name="Brooks K."/>
            <person name="Carrington M."/>
            <person name="Cherevach I."/>
            <person name="Chillingworth T.J."/>
            <person name="Churcher C."/>
            <person name="Clark L.N."/>
            <person name="Corton C.H."/>
            <person name="Cronin A."/>
            <person name="Davies R.M."/>
            <person name="Doggett J."/>
            <person name="Djikeng A."/>
            <person name="Feldblyum T."/>
            <person name="Field M.C."/>
            <person name="Fraser A."/>
            <person name="Goodhead I."/>
            <person name="Hance Z."/>
            <person name="Harper D."/>
            <person name="Harris B.R."/>
            <person name="Hauser H."/>
            <person name="Hostetler J."/>
            <person name="Ivens A."/>
            <person name="Jagels K."/>
            <person name="Johnson D."/>
            <person name="Johnson J."/>
            <person name="Jones K."/>
            <person name="Kerhornou A.X."/>
            <person name="Koo H."/>
            <person name="Larke N."/>
            <person name="Landfear S."/>
            <person name="Larkin C."/>
            <person name="Leech V."/>
            <person name="Line A."/>
            <person name="Lord A."/>
            <person name="Macleod A."/>
            <person name="Mooney P.J."/>
            <person name="Moule S."/>
            <person name="Martin D.M."/>
            <person name="Morgan G.W."/>
            <person name="Mungall K."/>
            <person name="Norbertczak H."/>
            <person name="Ormond D."/>
            <person name="Pai G."/>
            <person name="Peacock C.S."/>
            <person name="Peterson J."/>
            <person name="Quail M.A."/>
            <person name="Rabbinowitsch E."/>
            <person name="Rajandream M.A."/>
            <person name="Reitter C."/>
            <person name="Salzberg S.L."/>
            <person name="Sanders M."/>
            <person name="Schobel S."/>
            <person name="Sharp S."/>
            <person name="Simmonds M."/>
            <person name="Simpson A.J."/>
            <person name="Tallon L."/>
            <person name="Turner C.M."/>
            <person name="Tait A."/>
            <person name="Tivey A.R."/>
            <person name="Van Aken S."/>
            <person name="Walker D."/>
            <person name="Wanless D."/>
            <person name="Wang S."/>
            <person name="White B."/>
            <person name="White O."/>
            <person name="Whitehead S."/>
            <person name="Woodward J."/>
            <person name="Wortman J."/>
            <person name="Adams M.D."/>
            <person name="Embley T.M."/>
            <person name="Gull K."/>
            <person name="Ullu E."/>
            <person name="Barry J.D."/>
            <person name="Fairlamb A.H."/>
            <person name="Opperdoes F."/>
            <person name="Barrell B.G."/>
            <person name="Donelson J.E."/>
            <person name="Hall N."/>
            <person name="Fraser C.M."/>
            <person name="Melville S.E."/>
            <person name="El-Sayed N.M.A."/>
        </authorList>
    </citation>
    <scope>NUCLEOTIDE SEQUENCE [LARGE SCALE GENOMIC DNA]</scope>
    <source>
        <strain evidence="2">927/4 GUTat10.1</strain>
    </source>
</reference>